<comment type="catalytic activity">
    <reaction>
        <text>an acyl phosphate + H2O = a carboxylate + phosphate + H(+)</text>
        <dbReference type="Rhea" id="RHEA:14965"/>
        <dbReference type="ChEBI" id="CHEBI:15377"/>
        <dbReference type="ChEBI" id="CHEBI:15378"/>
        <dbReference type="ChEBI" id="CHEBI:29067"/>
        <dbReference type="ChEBI" id="CHEBI:43474"/>
        <dbReference type="ChEBI" id="CHEBI:59918"/>
        <dbReference type="EC" id="3.6.1.7"/>
    </reaction>
</comment>
<comment type="similarity">
    <text evidence="2">Belongs to the acylphosphatase family.</text>
</comment>
<name>ACYP_ARTS2</name>
<feature type="chain" id="PRO_0000326653" description="Acylphosphatase">
    <location>
        <begin position="1"/>
        <end position="109"/>
    </location>
</feature>
<feature type="domain" description="Acylphosphatase-like" evidence="1">
    <location>
        <begin position="22"/>
        <end position="109"/>
    </location>
</feature>
<feature type="active site" evidence="1">
    <location>
        <position position="37"/>
    </location>
</feature>
<feature type="active site" evidence="1">
    <location>
        <position position="55"/>
    </location>
</feature>
<evidence type="ECO:0000255" key="1">
    <source>
        <dbReference type="PROSITE-ProRule" id="PRU00520"/>
    </source>
</evidence>
<evidence type="ECO:0000305" key="2"/>
<proteinExistence type="inferred from homology"/>
<dbReference type="EC" id="3.6.1.7"/>
<dbReference type="EMBL" id="CP000454">
    <property type="protein sequence ID" value="ABK02315.1"/>
    <property type="molecule type" value="Genomic_DNA"/>
</dbReference>
<dbReference type="SMR" id="A0JTE5"/>
<dbReference type="STRING" id="290399.Arth_0918"/>
<dbReference type="KEGG" id="art:Arth_0918"/>
<dbReference type="eggNOG" id="COG1254">
    <property type="taxonomic scope" value="Bacteria"/>
</dbReference>
<dbReference type="HOGENOM" id="CLU_141932_3_0_11"/>
<dbReference type="OrthoDB" id="3182027at2"/>
<dbReference type="Proteomes" id="UP000000754">
    <property type="component" value="Chromosome"/>
</dbReference>
<dbReference type="GO" id="GO:0003998">
    <property type="term" value="F:acylphosphatase activity"/>
    <property type="evidence" value="ECO:0007669"/>
    <property type="project" value="UniProtKB-EC"/>
</dbReference>
<dbReference type="Gene3D" id="3.30.70.100">
    <property type="match status" value="1"/>
</dbReference>
<dbReference type="InterPro" id="IPR020456">
    <property type="entry name" value="Acylphosphatase"/>
</dbReference>
<dbReference type="InterPro" id="IPR001792">
    <property type="entry name" value="Acylphosphatase-like_dom"/>
</dbReference>
<dbReference type="InterPro" id="IPR036046">
    <property type="entry name" value="Acylphosphatase-like_dom_sf"/>
</dbReference>
<dbReference type="NCBIfam" id="NF011001">
    <property type="entry name" value="PRK14427.1"/>
    <property type="match status" value="1"/>
</dbReference>
<dbReference type="PANTHER" id="PTHR47268">
    <property type="entry name" value="ACYLPHOSPHATASE"/>
    <property type="match status" value="1"/>
</dbReference>
<dbReference type="PANTHER" id="PTHR47268:SF4">
    <property type="entry name" value="ACYLPHOSPHATASE"/>
    <property type="match status" value="1"/>
</dbReference>
<dbReference type="Pfam" id="PF00708">
    <property type="entry name" value="Acylphosphatase"/>
    <property type="match status" value="1"/>
</dbReference>
<dbReference type="SUPFAM" id="SSF54975">
    <property type="entry name" value="Acylphosphatase/BLUF domain-like"/>
    <property type="match status" value="1"/>
</dbReference>
<dbReference type="PROSITE" id="PS51160">
    <property type="entry name" value="ACYLPHOSPHATASE_3"/>
    <property type="match status" value="1"/>
</dbReference>
<organism>
    <name type="scientific">Arthrobacter sp. (strain FB24)</name>
    <dbReference type="NCBI Taxonomy" id="290399"/>
    <lineage>
        <taxon>Bacteria</taxon>
        <taxon>Bacillati</taxon>
        <taxon>Actinomycetota</taxon>
        <taxon>Actinomycetes</taxon>
        <taxon>Micrococcales</taxon>
        <taxon>Micrococcaceae</taxon>
        <taxon>Arthrobacter</taxon>
    </lineage>
</organism>
<sequence>MSPHYIGTMADAADHDAGQDVRLRARVEGVVQAVGFRYWTVRKAEELSLTGTVRNEDDGTVAVVVEGPQSVVLEFRRWLGSDDAPGRVDHVEESVSPATGEFSSFDVVY</sequence>
<reference key="1">
    <citation type="journal article" date="2013" name="Stand. Genomic Sci.">
        <title>Complete genome sequence of Arthrobacter sp. strain FB24.</title>
        <authorList>
            <person name="Nakatsu C.H."/>
            <person name="Barabote R."/>
            <person name="Thompson S."/>
            <person name="Bruce D."/>
            <person name="Detter C."/>
            <person name="Brettin T."/>
            <person name="Han C."/>
            <person name="Beasley F."/>
            <person name="Chen W."/>
            <person name="Konopka A."/>
            <person name="Xie G."/>
        </authorList>
    </citation>
    <scope>NUCLEOTIDE SEQUENCE [LARGE SCALE GENOMIC DNA]</scope>
    <source>
        <strain>FB24</strain>
    </source>
</reference>
<protein>
    <recommendedName>
        <fullName>Acylphosphatase</fullName>
        <ecNumber>3.6.1.7</ecNumber>
    </recommendedName>
    <alternativeName>
        <fullName>Acylphosphate phosphohydrolase</fullName>
    </alternativeName>
</protein>
<gene>
    <name type="primary">acyP</name>
    <name type="ordered locus">Arth_0918</name>
</gene>
<keyword id="KW-0378">Hydrolase</keyword>
<keyword id="KW-1185">Reference proteome</keyword>
<accession>A0JTE5</accession>